<evidence type="ECO:0000255" key="1">
    <source>
        <dbReference type="HAMAP-Rule" id="MF_00365"/>
    </source>
</evidence>
<accession>A5N460</accession>
<comment type="function">
    <text evidence="1">The RecF protein is involved in DNA metabolism; it is required for DNA replication and normal SOS inducibility. RecF binds preferentially to single-stranded, linear DNA. It also seems to bind ATP.</text>
</comment>
<comment type="subcellular location">
    <subcellularLocation>
        <location evidence="1">Cytoplasm</location>
    </subcellularLocation>
</comment>
<comment type="similarity">
    <text evidence="1">Belongs to the RecF family.</text>
</comment>
<protein>
    <recommendedName>
        <fullName evidence="1">DNA replication and repair protein RecF</fullName>
    </recommendedName>
</protein>
<feature type="chain" id="PRO_1000079584" description="DNA replication and repair protein RecF">
    <location>
        <begin position="1"/>
        <end position="364"/>
    </location>
</feature>
<feature type="binding site" evidence="1">
    <location>
        <begin position="30"/>
        <end position="37"/>
    </location>
    <ligand>
        <name>ATP</name>
        <dbReference type="ChEBI" id="CHEBI:30616"/>
    </ligand>
</feature>
<organism>
    <name type="scientific">Clostridium kluyveri (strain ATCC 8527 / DSM 555 / NBRC 12016 / NCIMB 10680 / K1)</name>
    <dbReference type="NCBI Taxonomy" id="431943"/>
    <lineage>
        <taxon>Bacteria</taxon>
        <taxon>Bacillati</taxon>
        <taxon>Bacillota</taxon>
        <taxon>Clostridia</taxon>
        <taxon>Eubacteriales</taxon>
        <taxon>Clostridiaceae</taxon>
        <taxon>Clostridium</taxon>
    </lineage>
</organism>
<sequence>MYIKYLKLINFRNYKELDIEFDKNINIFVGDNAQGKTNILESMYYCSIGKSPRTSKDKELINWDNKESYIKVHILKKLFNKKIEIKIFKEGKKGININSIKVSKLSELMGVLNVVMFSPEDLKIIKESPVYRRKFLDIELCKFSKKYYYGLVQYNKVLTARNIILKKWNKGNYIDILQVYDKQLAKYGEVIIKLRNNYLKKLSEKGKVIHSDITSGIENIEFKYMTCLTNFDNIEDDLFKILEFNRKKDIYKGITLYGPHRDDFIVNINGVNVRNFGSQGQQRTSILTMKFASLEIIKEIIGEYPVLLLDDVLSELDKNRQKYILSSIKDIQTFITCTGIDDIKKSIIDEAQLFIVKKGKVSRI</sequence>
<dbReference type="EMBL" id="CP000673">
    <property type="protein sequence ID" value="EDK32091.1"/>
    <property type="molecule type" value="Genomic_DNA"/>
</dbReference>
<dbReference type="RefSeq" id="WP_011988617.1">
    <property type="nucleotide sequence ID" value="NC_009706.1"/>
</dbReference>
<dbReference type="SMR" id="A5N460"/>
<dbReference type="STRING" id="431943.CKL_0004"/>
<dbReference type="KEGG" id="ckl:CKL_0004"/>
<dbReference type="eggNOG" id="COG1195">
    <property type="taxonomic scope" value="Bacteria"/>
</dbReference>
<dbReference type="HOGENOM" id="CLU_040267_0_1_9"/>
<dbReference type="Proteomes" id="UP000002411">
    <property type="component" value="Chromosome"/>
</dbReference>
<dbReference type="GO" id="GO:0005737">
    <property type="term" value="C:cytoplasm"/>
    <property type="evidence" value="ECO:0007669"/>
    <property type="project" value="UniProtKB-SubCell"/>
</dbReference>
<dbReference type="GO" id="GO:0005524">
    <property type="term" value="F:ATP binding"/>
    <property type="evidence" value="ECO:0007669"/>
    <property type="project" value="UniProtKB-UniRule"/>
</dbReference>
<dbReference type="GO" id="GO:0003697">
    <property type="term" value="F:single-stranded DNA binding"/>
    <property type="evidence" value="ECO:0007669"/>
    <property type="project" value="UniProtKB-UniRule"/>
</dbReference>
<dbReference type="GO" id="GO:0006260">
    <property type="term" value="P:DNA replication"/>
    <property type="evidence" value="ECO:0007669"/>
    <property type="project" value="UniProtKB-UniRule"/>
</dbReference>
<dbReference type="GO" id="GO:0000731">
    <property type="term" value="P:DNA synthesis involved in DNA repair"/>
    <property type="evidence" value="ECO:0007669"/>
    <property type="project" value="TreeGrafter"/>
</dbReference>
<dbReference type="GO" id="GO:0006302">
    <property type="term" value="P:double-strand break repair"/>
    <property type="evidence" value="ECO:0007669"/>
    <property type="project" value="TreeGrafter"/>
</dbReference>
<dbReference type="GO" id="GO:0009432">
    <property type="term" value="P:SOS response"/>
    <property type="evidence" value="ECO:0007669"/>
    <property type="project" value="UniProtKB-UniRule"/>
</dbReference>
<dbReference type="CDD" id="cd03242">
    <property type="entry name" value="ABC_RecF"/>
    <property type="match status" value="1"/>
</dbReference>
<dbReference type="Gene3D" id="3.40.50.300">
    <property type="entry name" value="P-loop containing nucleotide triphosphate hydrolases"/>
    <property type="match status" value="1"/>
</dbReference>
<dbReference type="Gene3D" id="1.20.1050.90">
    <property type="entry name" value="RecF/RecN/SMC, N-terminal domain"/>
    <property type="match status" value="1"/>
</dbReference>
<dbReference type="HAMAP" id="MF_00365">
    <property type="entry name" value="RecF"/>
    <property type="match status" value="1"/>
</dbReference>
<dbReference type="InterPro" id="IPR001238">
    <property type="entry name" value="DNA-binding_RecF"/>
</dbReference>
<dbReference type="InterPro" id="IPR018078">
    <property type="entry name" value="DNA-binding_RecF_CS"/>
</dbReference>
<dbReference type="InterPro" id="IPR027417">
    <property type="entry name" value="P-loop_NTPase"/>
</dbReference>
<dbReference type="InterPro" id="IPR003395">
    <property type="entry name" value="RecF/RecN/SMC_N"/>
</dbReference>
<dbReference type="InterPro" id="IPR042174">
    <property type="entry name" value="RecF_2"/>
</dbReference>
<dbReference type="NCBIfam" id="TIGR00611">
    <property type="entry name" value="recf"/>
    <property type="match status" value="1"/>
</dbReference>
<dbReference type="PANTHER" id="PTHR32182">
    <property type="entry name" value="DNA REPLICATION AND REPAIR PROTEIN RECF"/>
    <property type="match status" value="1"/>
</dbReference>
<dbReference type="PANTHER" id="PTHR32182:SF0">
    <property type="entry name" value="DNA REPLICATION AND REPAIR PROTEIN RECF"/>
    <property type="match status" value="1"/>
</dbReference>
<dbReference type="Pfam" id="PF02463">
    <property type="entry name" value="SMC_N"/>
    <property type="match status" value="1"/>
</dbReference>
<dbReference type="SUPFAM" id="SSF52540">
    <property type="entry name" value="P-loop containing nucleoside triphosphate hydrolases"/>
    <property type="match status" value="1"/>
</dbReference>
<dbReference type="PROSITE" id="PS00617">
    <property type="entry name" value="RECF_1"/>
    <property type="match status" value="1"/>
</dbReference>
<dbReference type="PROSITE" id="PS00618">
    <property type="entry name" value="RECF_2"/>
    <property type="match status" value="1"/>
</dbReference>
<name>RECF_CLOK5</name>
<proteinExistence type="inferred from homology"/>
<gene>
    <name evidence="1" type="primary">recF</name>
    <name type="ordered locus">CKL_0004</name>
</gene>
<keyword id="KW-0067">ATP-binding</keyword>
<keyword id="KW-0963">Cytoplasm</keyword>
<keyword id="KW-0227">DNA damage</keyword>
<keyword id="KW-0234">DNA repair</keyword>
<keyword id="KW-0235">DNA replication</keyword>
<keyword id="KW-0238">DNA-binding</keyword>
<keyword id="KW-0547">Nucleotide-binding</keyword>
<keyword id="KW-1185">Reference proteome</keyword>
<keyword id="KW-0742">SOS response</keyword>
<reference key="1">
    <citation type="journal article" date="2008" name="Proc. Natl. Acad. Sci. U.S.A.">
        <title>The genome of Clostridium kluyveri, a strict anaerobe with unique metabolic features.</title>
        <authorList>
            <person name="Seedorf H."/>
            <person name="Fricke W.F."/>
            <person name="Veith B."/>
            <person name="Brueggemann H."/>
            <person name="Liesegang H."/>
            <person name="Strittmatter A."/>
            <person name="Miethke M."/>
            <person name="Buckel W."/>
            <person name="Hinderberger J."/>
            <person name="Li F."/>
            <person name="Hagemeier C."/>
            <person name="Thauer R.K."/>
            <person name="Gottschalk G."/>
        </authorList>
    </citation>
    <scope>NUCLEOTIDE SEQUENCE [LARGE SCALE GENOMIC DNA]</scope>
    <source>
        <strain>ATCC 8527 / DSM 555 / NBRC 12016 / NCIMB 10680 / K1</strain>
    </source>
</reference>